<sequence length="213" mass="23364">MAAPAASGLSRQVRSFSTSVVRPFAKLVRPPVQVYGIEGRYATALYSAASKEKKLDQVEKELLRVGQLLKDPKVSLAVLNPYIKRTVKVKSLNDITKREKFSPLTANLMNLLAENGRLGNTQGIISAFSTIMSVHRGEVPCTVTTASPLDDAVLSELKTVLKSFLSPNQILKLEIKTDPSIMGGMIVRIGEKYVDMSAKSKIQKLSKAMREML</sequence>
<dbReference type="EMBL" id="AK005309">
    <property type="protein sequence ID" value="BAB23945.1"/>
    <property type="molecule type" value="mRNA"/>
</dbReference>
<dbReference type="EMBL" id="BC012241">
    <property type="protein sequence ID" value="AAH12241.1"/>
    <property type="molecule type" value="mRNA"/>
</dbReference>
<dbReference type="CCDS" id="CCDS28331.1"/>
<dbReference type="RefSeq" id="NP_613063.1">
    <property type="nucleotide sequence ID" value="NM_138597.2"/>
</dbReference>
<dbReference type="SMR" id="Q9DB20"/>
<dbReference type="BioGRID" id="205752">
    <property type="interactions" value="80"/>
</dbReference>
<dbReference type="FunCoup" id="Q9DB20">
    <property type="interactions" value="1956"/>
</dbReference>
<dbReference type="IntAct" id="Q9DB20">
    <property type="interactions" value="10"/>
</dbReference>
<dbReference type="MINT" id="Q9DB20"/>
<dbReference type="STRING" id="10090.ENSMUSP00000023677"/>
<dbReference type="GlyGen" id="Q9DB20">
    <property type="glycosylation" value="1 site, 1 O-linked glycan (1 site)"/>
</dbReference>
<dbReference type="iPTMnet" id="Q9DB20"/>
<dbReference type="MetOSite" id="Q9DB20"/>
<dbReference type="PhosphoSitePlus" id="Q9DB20"/>
<dbReference type="SwissPalm" id="Q9DB20"/>
<dbReference type="jPOST" id="Q9DB20"/>
<dbReference type="PaxDb" id="10090-ENSMUSP00000023677"/>
<dbReference type="PeptideAtlas" id="Q9DB20"/>
<dbReference type="ProteomicsDB" id="277093"/>
<dbReference type="Pumba" id="Q9DB20"/>
<dbReference type="TopDownProteomics" id="Q9DB20"/>
<dbReference type="DNASU" id="28080"/>
<dbReference type="Ensembl" id="ENSMUST00000023677.10">
    <property type="protein sequence ID" value="ENSMUSP00000023677.4"/>
    <property type="gene ID" value="ENSMUSG00000022956.12"/>
</dbReference>
<dbReference type="GeneID" id="28080"/>
<dbReference type="KEGG" id="mmu:28080"/>
<dbReference type="UCSC" id="uc007zys.1">
    <property type="organism name" value="mouse"/>
</dbReference>
<dbReference type="AGR" id="MGI:106341"/>
<dbReference type="CTD" id="539"/>
<dbReference type="MGI" id="MGI:106341">
    <property type="gene designation" value="Atp5po"/>
</dbReference>
<dbReference type="VEuPathDB" id="HostDB:ENSMUSG00000022956"/>
<dbReference type="eggNOG" id="KOG1662">
    <property type="taxonomic scope" value="Eukaryota"/>
</dbReference>
<dbReference type="GeneTree" id="ENSGT00390000015060"/>
<dbReference type="HOGENOM" id="CLU_085114_0_0_1"/>
<dbReference type="InParanoid" id="Q9DB20"/>
<dbReference type="OMA" id="MVDNIQD"/>
<dbReference type="OrthoDB" id="1262810at2759"/>
<dbReference type="PhylomeDB" id="Q9DB20"/>
<dbReference type="TreeFam" id="TF106241"/>
<dbReference type="Reactome" id="R-MMU-163210">
    <property type="pathway name" value="Formation of ATP by chemiosmotic coupling"/>
</dbReference>
<dbReference type="Reactome" id="R-MMU-8949613">
    <property type="pathway name" value="Cristae formation"/>
</dbReference>
<dbReference type="Reactome" id="R-MMU-9837999">
    <property type="pathway name" value="Mitochondrial protein degradation"/>
</dbReference>
<dbReference type="BioGRID-ORCS" id="28080">
    <property type="hits" value="22 hits in 78 CRISPR screens"/>
</dbReference>
<dbReference type="CD-CODE" id="CE726F99">
    <property type="entry name" value="Postsynaptic density"/>
</dbReference>
<dbReference type="ChiTaRS" id="Atp5o">
    <property type="organism name" value="mouse"/>
</dbReference>
<dbReference type="PRO" id="PR:Q9DB20"/>
<dbReference type="Proteomes" id="UP000000589">
    <property type="component" value="Chromosome 16"/>
</dbReference>
<dbReference type="RNAct" id="Q9DB20">
    <property type="molecule type" value="protein"/>
</dbReference>
<dbReference type="Bgee" id="ENSMUSG00000022956">
    <property type="expression patterns" value="Expressed in endocardial cushion and 262 other cell types or tissues"/>
</dbReference>
<dbReference type="ExpressionAtlas" id="Q9DB20">
    <property type="expression patterns" value="baseline and differential"/>
</dbReference>
<dbReference type="GO" id="GO:0009986">
    <property type="term" value="C:cell surface"/>
    <property type="evidence" value="ECO:0007669"/>
    <property type="project" value="Ensembl"/>
</dbReference>
<dbReference type="GO" id="GO:0005743">
    <property type="term" value="C:mitochondrial inner membrane"/>
    <property type="evidence" value="ECO:0007669"/>
    <property type="project" value="UniProtKB-SubCell"/>
</dbReference>
<dbReference type="GO" id="GO:0005739">
    <property type="term" value="C:mitochondrion"/>
    <property type="evidence" value="ECO:0007005"/>
    <property type="project" value="MGI"/>
</dbReference>
<dbReference type="GO" id="GO:0043209">
    <property type="term" value="C:myelin sheath"/>
    <property type="evidence" value="ECO:0007005"/>
    <property type="project" value="UniProtKB"/>
</dbReference>
<dbReference type="GO" id="GO:0005886">
    <property type="term" value="C:plasma membrane"/>
    <property type="evidence" value="ECO:0007669"/>
    <property type="project" value="Ensembl"/>
</dbReference>
<dbReference type="GO" id="GO:0045259">
    <property type="term" value="C:proton-transporting ATP synthase complex"/>
    <property type="evidence" value="ECO:0000250"/>
    <property type="project" value="UniProtKB"/>
</dbReference>
<dbReference type="GO" id="GO:0016887">
    <property type="term" value="F:ATP hydrolysis activity"/>
    <property type="evidence" value="ECO:0007669"/>
    <property type="project" value="Ensembl"/>
</dbReference>
<dbReference type="GO" id="GO:1903924">
    <property type="term" value="F:estradiol binding"/>
    <property type="evidence" value="ECO:0007669"/>
    <property type="project" value="Ensembl"/>
</dbReference>
<dbReference type="GO" id="GO:0044877">
    <property type="term" value="F:protein-containing complex binding"/>
    <property type="evidence" value="ECO:0007669"/>
    <property type="project" value="Ensembl"/>
</dbReference>
<dbReference type="GO" id="GO:0046933">
    <property type="term" value="F:proton-transporting ATP synthase activity, rotational mechanism"/>
    <property type="evidence" value="ECO:0007669"/>
    <property type="project" value="Ensembl"/>
</dbReference>
<dbReference type="GO" id="GO:0071320">
    <property type="term" value="P:cellular response to cAMP"/>
    <property type="evidence" value="ECO:0007669"/>
    <property type="project" value="Ensembl"/>
</dbReference>
<dbReference type="GO" id="GO:0071345">
    <property type="term" value="P:cellular response to cytokine stimulus"/>
    <property type="evidence" value="ECO:0007669"/>
    <property type="project" value="Ensembl"/>
</dbReference>
<dbReference type="GO" id="GO:0042776">
    <property type="term" value="P:proton motive force-driven mitochondrial ATP synthesis"/>
    <property type="evidence" value="ECO:0007669"/>
    <property type="project" value="Ensembl"/>
</dbReference>
<dbReference type="FunFam" id="1.10.520.20:FF:000002">
    <property type="entry name" value="ATP synthase subunit O, mitochondrial"/>
    <property type="match status" value="1"/>
</dbReference>
<dbReference type="Gene3D" id="1.10.520.20">
    <property type="entry name" value="N-terminal domain of the delta subunit of the F1F0-ATP synthase"/>
    <property type="match status" value="1"/>
</dbReference>
<dbReference type="HAMAP" id="MF_01416">
    <property type="entry name" value="ATP_synth_delta_bact"/>
    <property type="match status" value="1"/>
</dbReference>
<dbReference type="InterPro" id="IPR026015">
    <property type="entry name" value="ATP_synth_OSCP/delta_N_sf"/>
</dbReference>
<dbReference type="InterPro" id="IPR020781">
    <property type="entry name" value="ATPase_OSCP/d_CS"/>
</dbReference>
<dbReference type="InterPro" id="IPR000711">
    <property type="entry name" value="ATPase_OSCP/dsu"/>
</dbReference>
<dbReference type="NCBIfam" id="TIGR01145">
    <property type="entry name" value="ATP_synt_delta"/>
    <property type="match status" value="1"/>
</dbReference>
<dbReference type="PANTHER" id="PTHR11910">
    <property type="entry name" value="ATP SYNTHASE DELTA CHAIN"/>
    <property type="match status" value="1"/>
</dbReference>
<dbReference type="Pfam" id="PF00213">
    <property type="entry name" value="OSCP"/>
    <property type="match status" value="1"/>
</dbReference>
<dbReference type="PRINTS" id="PR00125">
    <property type="entry name" value="ATPASEDELTA"/>
</dbReference>
<dbReference type="SUPFAM" id="SSF47928">
    <property type="entry name" value="N-terminal domain of the delta subunit of the F1F0-ATP synthase"/>
    <property type="match status" value="1"/>
</dbReference>
<dbReference type="PROSITE" id="PS00389">
    <property type="entry name" value="ATPASE_DELTA"/>
    <property type="match status" value="1"/>
</dbReference>
<feature type="transit peptide" description="Mitochondrion" evidence="1">
    <location>
        <begin position="1"/>
        <end position="23"/>
    </location>
</feature>
<feature type="chain" id="PRO_0000002647" description="ATP synthase peripheral stalk subunit OSCP, mitochondrial">
    <location>
        <begin position="24"/>
        <end position="213"/>
    </location>
</feature>
<feature type="short sequence motif" description="SIFI-degron" evidence="4">
    <location>
        <begin position="5"/>
        <end position="23"/>
    </location>
</feature>
<feature type="modified residue" description="N6-acetyllysine" evidence="7">
    <location>
        <position position="54"/>
    </location>
</feature>
<feature type="modified residue" description="N6-acetyllysine" evidence="7">
    <location>
        <position position="60"/>
    </location>
</feature>
<feature type="modified residue" description="N6-acetyllysine" evidence="7">
    <location>
        <position position="70"/>
    </location>
</feature>
<feature type="modified residue" description="N6-acetyllysine" evidence="7">
    <location>
        <position position="73"/>
    </location>
</feature>
<feature type="modified residue" description="N6-succinyllysine" evidence="8">
    <location>
        <position position="90"/>
    </location>
</feature>
<feature type="modified residue" description="N6-acetyllysine; alternate" evidence="7">
    <location>
        <position position="100"/>
    </location>
</feature>
<feature type="modified residue" description="N6-succinyllysine; alternate" evidence="8">
    <location>
        <position position="100"/>
    </location>
</feature>
<feature type="modified residue" description="N6-acetyllysine; alternate" evidence="7">
    <location>
        <position position="158"/>
    </location>
</feature>
<feature type="modified residue" description="N6-succinyllysine; alternate" evidence="8">
    <location>
        <position position="158"/>
    </location>
</feature>
<feature type="modified residue" description="N6-acetyllysine; alternate" evidence="7">
    <location>
        <position position="162"/>
    </location>
</feature>
<feature type="modified residue" description="N6-succinyllysine; alternate" evidence="8">
    <location>
        <position position="162"/>
    </location>
</feature>
<feature type="modified residue" description="N6-acetyllysine" evidence="7">
    <location>
        <position position="172"/>
    </location>
</feature>
<feature type="modified residue" description="N6-acetyllysine" evidence="7">
    <location>
        <position position="176"/>
    </location>
</feature>
<feature type="modified residue" description="N6-acetyllysine" evidence="4">
    <location>
        <position position="192"/>
    </location>
</feature>
<feature type="modified residue" description="N6-succinyllysine" evidence="8">
    <location>
        <position position="199"/>
    </location>
</feature>
<evidence type="ECO:0000250" key="1"/>
<evidence type="ECO:0000250" key="2">
    <source>
        <dbReference type="UniProtKB" id="P13621"/>
    </source>
</evidence>
<evidence type="ECO:0000250" key="3">
    <source>
        <dbReference type="UniProtKB" id="P19483"/>
    </source>
</evidence>
<evidence type="ECO:0000250" key="4">
    <source>
        <dbReference type="UniProtKB" id="P48047"/>
    </source>
</evidence>
<evidence type="ECO:0000269" key="5">
    <source>
    </source>
</evidence>
<evidence type="ECO:0000305" key="6"/>
<evidence type="ECO:0007744" key="7">
    <source>
    </source>
</evidence>
<evidence type="ECO:0007744" key="8">
    <source>
    </source>
</evidence>
<protein>
    <recommendedName>
        <fullName evidence="6">ATP synthase peripheral stalk subunit OSCP, mitochondrial</fullName>
    </recommendedName>
    <alternativeName>
        <fullName evidence="6">ATP synthase subunit O</fullName>
    </alternativeName>
    <alternativeName>
        <fullName>Oligomycin sensitivity conferral protein</fullName>
        <shortName>OSCP</shortName>
    </alternativeName>
</protein>
<proteinExistence type="evidence at protein level"/>
<reference key="1">
    <citation type="journal article" date="2005" name="Science">
        <title>The transcriptional landscape of the mammalian genome.</title>
        <authorList>
            <person name="Carninci P."/>
            <person name="Kasukawa T."/>
            <person name="Katayama S."/>
            <person name="Gough J."/>
            <person name="Frith M.C."/>
            <person name="Maeda N."/>
            <person name="Oyama R."/>
            <person name="Ravasi T."/>
            <person name="Lenhard B."/>
            <person name="Wells C."/>
            <person name="Kodzius R."/>
            <person name="Shimokawa K."/>
            <person name="Bajic V.B."/>
            <person name="Brenner S.E."/>
            <person name="Batalov S."/>
            <person name="Forrest A.R."/>
            <person name="Zavolan M."/>
            <person name="Davis M.J."/>
            <person name="Wilming L.G."/>
            <person name="Aidinis V."/>
            <person name="Allen J.E."/>
            <person name="Ambesi-Impiombato A."/>
            <person name="Apweiler R."/>
            <person name="Aturaliya R.N."/>
            <person name="Bailey T.L."/>
            <person name="Bansal M."/>
            <person name="Baxter L."/>
            <person name="Beisel K.W."/>
            <person name="Bersano T."/>
            <person name="Bono H."/>
            <person name="Chalk A.M."/>
            <person name="Chiu K.P."/>
            <person name="Choudhary V."/>
            <person name="Christoffels A."/>
            <person name="Clutterbuck D.R."/>
            <person name="Crowe M.L."/>
            <person name="Dalla E."/>
            <person name="Dalrymple B.P."/>
            <person name="de Bono B."/>
            <person name="Della Gatta G."/>
            <person name="di Bernardo D."/>
            <person name="Down T."/>
            <person name="Engstrom P."/>
            <person name="Fagiolini M."/>
            <person name="Faulkner G."/>
            <person name="Fletcher C.F."/>
            <person name="Fukushima T."/>
            <person name="Furuno M."/>
            <person name="Futaki S."/>
            <person name="Gariboldi M."/>
            <person name="Georgii-Hemming P."/>
            <person name="Gingeras T.R."/>
            <person name="Gojobori T."/>
            <person name="Green R.E."/>
            <person name="Gustincich S."/>
            <person name="Harbers M."/>
            <person name="Hayashi Y."/>
            <person name="Hensch T.K."/>
            <person name="Hirokawa N."/>
            <person name="Hill D."/>
            <person name="Huminiecki L."/>
            <person name="Iacono M."/>
            <person name="Ikeo K."/>
            <person name="Iwama A."/>
            <person name="Ishikawa T."/>
            <person name="Jakt M."/>
            <person name="Kanapin A."/>
            <person name="Katoh M."/>
            <person name="Kawasawa Y."/>
            <person name="Kelso J."/>
            <person name="Kitamura H."/>
            <person name="Kitano H."/>
            <person name="Kollias G."/>
            <person name="Krishnan S.P."/>
            <person name="Kruger A."/>
            <person name="Kummerfeld S.K."/>
            <person name="Kurochkin I.V."/>
            <person name="Lareau L.F."/>
            <person name="Lazarevic D."/>
            <person name="Lipovich L."/>
            <person name="Liu J."/>
            <person name="Liuni S."/>
            <person name="McWilliam S."/>
            <person name="Madan Babu M."/>
            <person name="Madera M."/>
            <person name="Marchionni L."/>
            <person name="Matsuda H."/>
            <person name="Matsuzawa S."/>
            <person name="Miki H."/>
            <person name="Mignone F."/>
            <person name="Miyake S."/>
            <person name="Morris K."/>
            <person name="Mottagui-Tabar S."/>
            <person name="Mulder N."/>
            <person name="Nakano N."/>
            <person name="Nakauchi H."/>
            <person name="Ng P."/>
            <person name="Nilsson R."/>
            <person name="Nishiguchi S."/>
            <person name="Nishikawa S."/>
            <person name="Nori F."/>
            <person name="Ohara O."/>
            <person name="Okazaki Y."/>
            <person name="Orlando V."/>
            <person name="Pang K.C."/>
            <person name="Pavan W.J."/>
            <person name="Pavesi G."/>
            <person name="Pesole G."/>
            <person name="Petrovsky N."/>
            <person name="Piazza S."/>
            <person name="Reed J."/>
            <person name="Reid J.F."/>
            <person name="Ring B.Z."/>
            <person name="Ringwald M."/>
            <person name="Rost B."/>
            <person name="Ruan Y."/>
            <person name="Salzberg S.L."/>
            <person name="Sandelin A."/>
            <person name="Schneider C."/>
            <person name="Schoenbach C."/>
            <person name="Sekiguchi K."/>
            <person name="Semple C.A."/>
            <person name="Seno S."/>
            <person name="Sessa L."/>
            <person name="Sheng Y."/>
            <person name="Shibata Y."/>
            <person name="Shimada H."/>
            <person name="Shimada K."/>
            <person name="Silva D."/>
            <person name="Sinclair B."/>
            <person name="Sperling S."/>
            <person name="Stupka E."/>
            <person name="Sugiura K."/>
            <person name="Sultana R."/>
            <person name="Takenaka Y."/>
            <person name="Taki K."/>
            <person name="Tammoja K."/>
            <person name="Tan S.L."/>
            <person name="Tang S."/>
            <person name="Taylor M.S."/>
            <person name="Tegner J."/>
            <person name="Teichmann S.A."/>
            <person name="Ueda H.R."/>
            <person name="van Nimwegen E."/>
            <person name="Verardo R."/>
            <person name="Wei C.L."/>
            <person name="Yagi K."/>
            <person name="Yamanishi H."/>
            <person name="Zabarovsky E."/>
            <person name="Zhu S."/>
            <person name="Zimmer A."/>
            <person name="Hide W."/>
            <person name="Bult C."/>
            <person name="Grimmond S.M."/>
            <person name="Teasdale R.D."/>
            <person name="Liu E.T."/>
            <person name="Brusic V."/>
            <person name="Quackenbush J."/>
            <person name="Wahlestedt C."/>
            <person name="Mattick J.S."/>
            <person name="Hume D.A."/>
            <person name="Kai C."/>
            <person name="Sasaki D."/>
            <person name="Tomaru Y."/>
            <person name="Fukuda S."/>
            <person name="Kanamori-Katayama M."/>
            <person name="Suzuki M."/>
            <person name="Aoki J."/>
            <person name="Arakawa T."/>
            <person name="Iida J."/>
            <person name="Imamura K."/>
            <person name="Itoh M."/>
            <person name="Kato T."/>
            <person name="Kawaji H."/>
            <person name="Kawagashira N."/>
            <person name="Kawashima T."/>
            <person name="Kojima M."/>
            <person name="Kondo S."/>
            <person name="Konno H."/>
            <person name="Nakano K."/>
            <person name="Ninomiya N."/>
            <person name="Nishio T."/>
            <person name="Okada M."/>
            <person name="Plessy C."/>
            <person name="Shibata K."/>
            <person name="Shiraki T."/>
            <person name="Suzuki S."/>
            <person name="Tagami M."/>
            <person name="Waki K."/>
            <person name="Watahiki A."/>
            <person name="Okamura-Oho Y."/>
            <person name="Suzuki H."/>
            <person name="Kawai J."/>
            <person name="Hayashizaki Y."/>
        </authorList>
    </citation>
    <scope>NUCLEOTIDE SEQUENCE [LARGE SCALE MRNA]</scope>
    <source>
        <strain>C57BL/6J</strain>
        <tissue>Cerebellum</tissue>
    </source>
</reference>
<reference key="2">
    <citation type="journal article" date="2004" name="Genome Res.">
        <title>The status, quality, and expansion of the NIH full-length cDNA project: the Mammalian Gene Collection (MGC).</title>
        <authorList>
            <consortium name="The MGC Project Team"/>
        </authorList>
    </citation>
    <scope>NUCLEOTIDE SEQUENCE [LARGE SCALE MRNA]</scope>
    <source>
        <tissue>Mammary tumor</tissue>
    </source>
</reference>
<reference key="3">
    <citation type="submission" date="2007-04" db="UniProtKB">
        <authorList>
            <person name="Lubec G."/>
            <person name="Kang S.U."/>
        </authorList>
    </citation>
    <scope>PROTEIN SEQUENCE OF 27-51; 65-84; 99-158; 163-172 AND 177-188</scope>
    <scope>IDENTIFICATION BY MASS SPECTROMETRY</scope>
    <source>
        <strain>C57BL/6J</strain>
        <tissue>Brain</tissue>
    </source>
</reference>
<reference key="4">
    <citation type="journal article" date="2010" name="Cell">
        <title>A tissue-specific atlas of mouse protein phosphorylation and expression.</title>
        <authorList>
            <person name="Huttlin E.L."/>
            <person name="Jedrychowski M.P."/>
            <person name="Elias J.E."/>
            <person name="Goswami T."/>
            <person name="Rad R."/>
            <person name="Beausoleil S.A."/>
            <person name="Villen J."/>
            <person name="Haas W."/>
            <person name="Sowa M.E."/>
            <person name="Gygi S.P."/>
        </authorList>
    </citation>
    <scope>IDENTIFICATION BY MASS SPECTROMETRY [LARGE SCALE ANALYSIS]</scope>
    <source>
        <tissue>Brain</tissue>
        <tissue>Brown adipose tissue</tissue>
        <tissue>Heart</tissue>
        <tissue>Kidney</tissue>
        <tissue>Liver</tissue>
        <tissue>Lung</tissue>
        <tissue>Pancreas</tissue>
        <tissue>Spleen</tissue>
        <tissue>Testis</tissue>
    </source>
</reference>
<reference key="5">
    <citation type="journal article" date="2013" name="Mol. Cell">
        <title>SIRT5-mediated lysine desuccinylation impacts diverse metabolic pathways.</title>
        <authorList>
            <person name="Park J."/>
            <person name="Chen Y."/>
            <person name="Tishkoff D.X."/>
            <person name="Peng C."/>
            <person name="Tan M."/>
            <person name="Dai L."/>
            <person name="Xie Z."/>
            <person name="Zhang Y."/>
            <person name="Zwaans B.M."/>
            <person name="Skinner M.E."/>
            <person name="Lombard D.B."/>
            <person name="Zhao Y."/>
        </authorList>
    </citation>
    <scope>SUCCINYLATION [LARGE SCALE ANALYSIS] AT LYS-90; LYS-100; LYS-158; LYS-162 AND LYS-199</scope>
    <scope>IDENTIFICATION BY MASS SPECTROMETRY [LARGE SCALE ANALYSIS]</scope>
    <source>
        <tissue>Liver</tissue>
    </source>
</reference>
<reference key="6">
    <citation type="journal article" date="2013" name="Proc. Natl. Acad. Sci. U.S.A.">
        <title>Label-free quantitative proteomics of the lysine acetylome in mitochondria identifies substrates of SIRT3 in metabolic pathways.</title>
        <authorList>
            <person name="Rardin M.J."/>
            <person name="Newman J.C."/>
            <person name="Held J.M."/>
            <person name="Cusack M.P."/>
            <person name="Sorensen D.J."/>
            <person name="Li B."/>
            <person name="Schilling B."/>
            <person name="Mooney S.D."/>
            <person name="Kahn C.R."/>
            <person name="Verdin E."/>
            <person name="Gibson B.W."/>
        </authorList>
    </citation>
    <scope>ACETYLATION [LARGE SCALE ANALYSIS] AT LYS-54; LYS-60; LYS-70; LYS-73; LYS-100; LYS-158; LYS-162; LYS-172 AND LYS-176</scope>
    <scope>IDENTIFICATION BY MASS SPECTROMETRY [LARGE SCALE ANALYSIS]</scope>
    <source>
        <tissue>Liver</tissue>
    </source>
</reference>
<accession>Q9DB20</accession>
<gene>
    <name evidence="4" type="primary">Atp5po</name>
    <name type="synonym">Atp5o</name>
    <name type="synonym">D12Wsu28e</name>
</gene>
<organism>
    <name type="scientific">Mus musculus</name>
    <name type="common">Mouse</name>
    <dbReference type="NCBI Taxonomy" id="10090"/>
    <lineage>
        <taxon>Eukaryota</taxon>
        <taxon>Metazoa</taxon>
        <taxon>Chordata</taxon>
        <taxon>Craniata</taxon>
        <taxon>Vertebrata</taxon>
        <taxon>Euteleostomi</taxon>
        <taxon>Mammalia</taxon>
        <taxon>Eutheria</taxon>
        <taxon>Euarchontoglires</taxon>
        <taxon>Glires</taxon>
        <taxon>Rodentia</taxon>
        <taxon>Myomorpha</taxon>
        <taxon>Muroidea</taxon>
        <taxon>Muridae</taxon>
        <taxon>Murinae</taxon>
        <taxon>Mus</taxon>
        <taxon>Mus</taxon>
    </lineage>
</organism>
<comment type="function">
    <text evidence="2 3 4">Subunit OSCP, of the mitochondrial membrane ATP synthase complex (F(1)F(0) ATP synthase or Complex V) that produces ATP from ADP in the presence of a proton gradient across the membrane which is generated by electron transport complexes of the respiratory chain. ATP synthase complex consist of a soluble F(1) head domain - the catalytic core - and a membrane F(1) domain - the membrane proton channel. These two domains are linked by a central stalk rotating inside the F(1) region and a stationary peripheral stalk. During catalysis, ATP synthesis in the catalytic domain of F(1) is coupled via a rotary mechanism of the central stalk subunits to proton translocation (By similarity). In vivo, can only synthesize ATP although its ATP hydrolase activity can be activated artificially in vitro (By similarity). Part of the complex F(0) domain (By similarity). Part of the complex F(0) domain and the peripheric stalk, which acts as a stator to hold the catalytic alpha(3)beta(3) subcomplex and subunit a/ATP6 static relative to the rotary elements (By similarity).</text>
</comment>
<comment type="subunit">
    <text evidence="4">Component of the ATP synthase complex composed at least of ATP5F1A/subunit alpha, ATP5F1B/subunit beta, ATP5MC1/subunit c (homooctomer), MT-ATP6/subunit a, MT-ATP8/subunit 8, ATP5ME/subunit e, ATP5MF/subunit f, ATP5MG/subunit g, ATP5MK/subunit k, ATP5MJ/subunit j, ATP5F1C/subunit gamma, ATP5F1D/subunit delta, ATP5F1E/subunit epsilon, ATP5PF/subunit F6, ATP5PB/subunit b, ATP5PD/subunit d, ATP5PO/subunit OSCP. ATP synthase complex consists of a soluble F(1) head domain (subunits alpha(3) and beta(3)) - the catalytic core - and a membrane F(0) domain - the membrane proton channel (subunits c, a, 8, e, f, g, k and j). These two domains are linked by a central stalk (subunits gamma, delta, and epsilon) rotating inside the F1 region and a stationary peripheral stalk (subunits F6, b, d, and OSCP).</text>
</comment>
<comment type="subcellular location">
    <subcellularLocation>
        <location evidence="1">Mitochondrion</location>
    </subcellularLocation>
    <subcellularLocation>
        <location evidence="1">Mitochondrion inner membrane</location>
    </subcellularLocation>
</comment>
<comment type="PTM">
    <text evidence="5">Acetylation of Lys-70 and Lys-158 is observed in liver mitochondria from fasted mice but not from fed mice.</text>
</comment>
<comment type="PTM">
    <text evidence="4">Acetylation at Lys-162 decreases ATP production. Deacetylated by SIRT3 (By similarity).</text>
</comment>
<comment type="PTM">
    <text evidence="4">In response to mitochondrial stress, the precursor protein is ubiquitinated by the SIFI complex in the cytoplasm before mitochondrial import, leading to its degradation. Within the SIFI complex, UBR4 initiates ubiquitin chain that are further elongated or branched by KCMF1.</text>
</comment>
<comment type="similarity">
    <text evidence="6">Belongs to the ATPase delta chain family.</text>
</comment>
<name>ATPO_MOUSE</name>
<keyword id="KW-0007">Acetylation</keyword>
<keyword id="KW-0066">ATP synthesis</keyword>
<keyword id="KW-0903">Direct protein sequencing</keyword>
<keyword id="KW-0375">Hydrogen ion transport</keyword>
<keyword id="KW-0406">Ion transport</keyword>
<keyword id="KW-0472">Membrane</keyword>
<keyword id="KW-0496">Mitochondrion</keyword>
<keyword id="KW-0999">Mitochondrion inner membrane</keyword>
<keyword id="KW-1185">Reference proteome</keyword>
<keyword id="KW-0809">Transit peptide</keyword>
<keyword id="KW-0813">Transport</keyword>
<keyword id="KW-0832">Ubl conjugation</keyword>